<sequence>MEFYEAKAYSNLLKKKKTGNLFKNDPTITTTTTQINKEEIISDPVNIIISEQNKKSKKNILHFFKKFKNNNNLDNKIIIIEKDQNAQKNYEEDIPSLI</sequence>
<feature type="chain" id="PRO_0000346955" description="Uncharacterized protein DDB_G0289163">
    <location>
        <begin position="1"/>
        <end position="98"/>
    </location>
</feature>
<gene>
    <name type="ORF">DDB_G0289163</name>
</gene>
<reference key="1">
    <citation type="journal article" date="2005" name="Nature">
        <title>The genome of the social amoeba Dictyostelium discoideum.</title>
        <authorList>
            <person name="Eichinger L."/>
            <person name="Pachebat J.A."/>
            <person name="Gloeckner G."/>
            <person name="Rajandream M.A."/>
            <person name="Sucgang R."/>
            <person name="Berriman M."/>
            <person name="Song J."/>
            <person name="Olsen R."/>
            <person name="Szafranski K."/>
            <person name="Xu Q."/>
            <person name="Tunggal B."/>
            <person name="Kummerfeld S."/>
            <person name="Madera M."/>
            <person name="Konfortov B.A."/>
            <person name="Rivero F."/>
            <person name="Bankier A.T."/>
            <person name="Lehmann R."/>
            <person name="Hamlin N."/>
            <person name="Davies R."/>
            <person name="Gaudet P."/>
            <person name="Fey P."/>
            <person name="Pilcher K."/>
            <person name="Chen G."/>
            <person name="Saunders D."/>
            <person name="Sodergren E.J."/>
            <person name="Davis P."/>
            <person name="Kerhornou A."/>
            <person name="Nie X."/>
            <person name="Hall N."/>
            <person name="Anjard C."/>
            <person name="Hemphill L."/>
            <person name="Bason N."/>
            <person name="Farbrother P."/>
            <person name="Desany B."/>
            <person name="Just E."/>
            <person name="Morio T."/>
            <person name="Rost R."/>
            <person name="Churcher C.M."/>
            <person name="Cooper J."/>
            <person name="Haydock S."/>
            <person name="van Driessche N."/>
            <person name="Cronin A."/>
            <person name="Goodhead I."/>
            <person name="Muzny D.M."/>
            <person name="Mourier T."/>
            <person name="Pain A."/>
            <person name="Lu M."/>
            <person name="Harper D."/>
            <person name="Lindsay R."/>
            <person name="Hauser H."/>
            <person name="James K.D."/>
            <person name="Quiles M."/>
            <person name="Madan Babu M."/>
            <person name="Saito T."/>
            <person name="Buchrieser C."/>
            <person name="Wardroper A."/>
            <person name="Felder M."/>
            <person name="Thangavelu M."/>
            <person name="Johnson D."/>
            <person name="Knights A."/>
            <person name="Loulseged H."/>
            <person name="Mungall K.L."/>
            <person name="Oliver K."/>
            <person name="Price C."/>
            <person name="Quail M.A."/>
            <person name="Urushihara H."/>
            <person name="Hernandez J."/>
            <person name="Rabbinowitsch E."/>
            <person name="Steffen D."/>
            <person name="Sanders M."/>
            <person name="Ma J."/>
            <person name="Kohara Y."/>
            <person name="Sharp S."/>
            <person name="Simmonds M.N."/>
            <person name="Spiegler S."/>
            <person name="Tivey A."/>
            <person name="Sugano S."/>
            <person name="White B."/>
            <person name="Walker D."/>
            <person name="Woodward J.R."/>
            <person name="Winckler T."/>
            <person name="Tanaka Y."/>
            <person name="Shaulsky G."/>
            <person name="Schleicher M."/>
            <person name="Weinstock G.M."/>
            <person name="Rosenthal A."/>
            <person name="Cox E.C."/>
            <person name="Chisholm R.L."/>
            <person name="Gibbs R.A."/>
            <person name="Loomis W.F."/>
            <person name="Platzer M."/>
            <person name="Kay R.R."/>
            <person name="Williams J.G."/>
            <person name="Dear P.H."/>
            <person name="Noegel A.A."/>
            <person name="Barrell B.G."/>
            <person name="Kuspa A."/>
        </authorList>
    </citation>
    <scope>NUCLEOTIDE SEQUENCE [LARGE SCALE GENOMIC DNA]</scope>
    <source>
        <strain>AX4</strain>
    </source>
</reference>
<keyword id="KW-1185">Reference proteome</keyword>
<organism>
    <name type="scientific">Dictyostelium discoideum</name>
    <name type="common">Social amoeba</name>
    <dbReference type="NCBI Taxonomy" id="44689"/>
    <lineage>
        <taxon>Eukaryota</taxon>
        <taxon>Amoebozoa</taxon>
        <taxon>Evosea</taxon>
        <taxon>Eumycetozoa</taxon>
        <taxon>Dictyostelia</taxon>
        <taxon>Dictyosteliales</taxon>
        <taxon>Dictyosteliaceae</taxon>
        <taxon>Dictyostelium</taxon>
    </lineage>
</organism>
<dbReference type="EMBL" id="AAFI02000130">
    <property type="protein sequence ID" value="EAL62860.1"/>
    <property type="molecule type" value="Genomic_DNA"/>
</dbReference>
<dbReference type="RefSeq" id="XP_636364.1">
    <property type="nucleotide sequence ID" value="XM_631272.1"/>
</dbReference>
<dbReference type="PaxDb" id="44689-DDB0188290"/>
<dbReference type="EnsemblProtists" id="EAL62860">
    <property type="protein sequence ID" value="EAL62860"/>
    <property type="gene ID" value="DDB_G0289163"/>
</dbReference>
<dbReference type="GeneID" id="8626992"/>
<dbReference type="KEGG" id="ddi:DDB_G0289163"/>
<dbReference type="dictyBase" id="DDB_G0289163"/>
<dbReference type="VEuPathDB" id="AmoebaDB:DDB_G0289163"/>
<dbReference type="HOGENOM" id="CLU_2337949_0_0_1"/>
<dbReference type="InParanoid" id="Q54HX0"/>
<dbReference type="PRO" id="PR:Q54HX0"/>
<dbReference type="Proteomes" id="UP000002195">
    <property type="component" value="Chromosome 5"/>
</dbReference>
<protein>
    <recommendedName>
        <fullName>Uncharacterized protein DDB_G0289163</fullName>
    </recommendedName>
</protein>
<proteinExistence type="predicted"/>
<accession>Q54HX0</accession>
<name>Y8829_DICDI</name>